<sequence>MDSTGRQPLSQDGQPWQALASGLGFPDEDQKYWWSVMAPLLGELMKWANYPVDKQYLVLAFCHEYILPFCGPRPTAEGGIFWPTLITKDGTPFEPSLNFYKNKATLRVGYAPACELSGSNDDPINQRAPIAALEHQKRVLPQQNLKWVDNFKKAWFIDNDDAVALKARVHNELFEQAAVQCLIGYVFSDYTQVKVAMSPLWKSVQTGQQISRVIWDTFRQLGDDASSYLDCLSVLEEYTESKQAKLAQVQPSFVNFDVNLKGDYQQSRLKVYYATPCTAFDTMVQVFTLGGRLKGPEVDHAIECLRVLWPSVLAVPENHPDDQDLPRRYHSVAVTQFNFELWPGAKLPVPQIYLPTNFYGRDELEIAEGLEGFFKTLGWSEPFHAYKQNYIATCATPEGKWKAIQHDVSFSFKDSSPYVSVYYKPELSVLSSPS</sequence>
<accession>A0A2I6PIZ6</accession>
<dbReference type="EC" id="2.5.1.-" evidence="5"/>
<dbReference type="EMBL" id="MG182145">
    <property type="protein sequence ID" value="AUM60055.1"/>
    <property type="molecule type" value="Genomic_DNA"/>
</dbReference>
<dbReference type="SMR" id="A0A2I6PIZ6"/>
<dbReference type="GO" id="GO:0016765">
    <property type="term" value="F:transferase activity, transferring alkyl or aryl (other than methyl) groups"/>
    <property type="evidence" value="ECO:0007669"/>
    <property type="project" value="InterPro"/>
</dbReference>
<dbReference type="GO" id="GO:0009820">
    <property type="term" value="P:alkaloid metabolic process"/>
    <property type="evidence" value="ECO:0007669"/>
    <property type="project" value="InterPro"/>
</dbReference>
<dbReference type="CDD" id="cd13929">
    <property type="entry name" value="PT-DMATS_CymD"/>
    <property type="match status" value="1"/>
</dbReference>
<dbReference type="InterPro" id="IPR017795">
    <property type="entry name" value="Aro_prenylTrfase_DMATS"/>
</dbReference>
<dbReference type="InterPro" id="IPR012148">
    <property type="entry name" value="DMATS-type_fun"/>
</dbReference>
<dbReference type="NCBIfam" id="TIGR03429">
    <property type="entry name" value="arom_pren_DMATS"/>
    <property type="match status" value="1"/>
</dbReference>
<dbReference type="PANTHER" id="PTHR40627">
    <property type="entry name" value="INDOLE PRENYLTRANSFERASE TDIB-RELATED"/>
    <property type="match status" value="1"/>
</dbReference>
<dbReference type="PANTHER" id="PTHR40627:SF3">
    <property type="entry name" value="PRENYLTRANSFERASE ASQH2-RELATED"/>
    <property type="match status" value="1"/>
</dbReference>
<dbReference type="Pfam" id="PF11991">
    <property type="entry name" value="Trp_DMAT"/>
    <property type="match status" value="1"/>
</dbReference>
<dbReference type="PIRSF" id="PIRSF000509">
    <property type="entry name" value="Trp_DMAT"/>
    <property type="match status" value="1"/>
</dbReference>
<keyword id="KW-0808">Transferase</keyword>
<organism>
    <name type="scientific">Hypoxylon pulicicidum</name>
    <dbReference type="NCBI Taxonomy" id="1243767"/>
    <lineage>
        <taxon>Eukaryota</taxon>
        <taxon>Fungi</taxon>
        <taxon>Dikarya</taxon>
        <taxon>Ascomycota</taxon>
        <taxon>Pezizomycotina</taxon>
        <taxon>Sordariomycetes</taxon>
        <taxon>Xylariomycetidae</taxon>
        <taxon>Xylariales</taxon>
        <taxon>Hypoxylaceae</taxon>
        <taxon>Hypoxylon</taxon>
    </lineage>
</organism>
<reference key="1">
    <citation type="journal article" date="2018" name="J. Am. Chem. Soc.">
        <title>Heterologous biosynthesis of nodulisporic acid F.</title>
        <authorList>
            <person name="Van de Bittner K.C."/>
            <person name="Nicholson M.J."/>
            <person name="Bustamante L.Y."/>
            <person name="Kessans S.A."/>
            <person name="Ram A."/>
            <person name="van Dolleweerd C.J."/>
            <person name="Scott B."/>
            <person name="Parker E.J."/>
        </authorList>
    </citation>
    <scope>NUCLEOTIDE SEQUENCE [GENOMIC DNA]</scope>
    <scope>IDENTIFICATION</scope>
    <scope>FUNCTION</scope>
    <scope>PATHWAY</scope>
    <source>
        <strain>MF5954 / ATCC 74245</strain>
    </source>
</reference>
<name>NODD2_HYPPI</name>
<protein>
    <recommendedName>
        <fullName evidence="3">Indole diterpene prenyltransferase nodD2</fullName>
        <ecNumber evidence="5">2.5.1.-</ecNumber>
    </recommendedName>
    <alternativeName>
        <fullName evidence="3">Nodulisporic acid biosynthesis cluster protein D2</fullName>
    </alternativeName>
</protein>
<gene>
    <name evidence="3" type="primary">nodD2</name>
</gene>
<evidence type="ECO:0000250" key="1">
    <source>
        <dbReference type="UniProtKB" id="Q50EL0"/>
    </source>
</evidence>
<evidence type="ECO:0000269" key="2">
    <source>
    </source>
</evidence>
<evidence type="ECO:0000303" key="3">
    <source>
    </source>
</evidence>
<evidence type="ECO:0000305" key="4"/>
<evidence type="ECO:0000305" key="5">
    <source>
    </source>
</evidence>
<comment type="function">
    <text evidence="2 5">Indole diterpene prenyltransferase; part of the gene cluster that mediates the biosynthesis of the indole diterpenes nodulisporic acids (NA). Nodulisporic acid A (NAA) and its chemically modified derivatives are of particular significance because of their highly potent insecticidal activity against blood-feeding arthropods and lack of observable adverse effects on mammals, in particular the tremogenicity associated with the paspaline-derived IDTs is not observed (PubMed:29283570). The geranylgeranyl diphosphate (GGPP) synthase ggs1, localized outside of the cluster, is proposed to catalyze the first step in nodulisporic acid biosynthesis via conversion of farnesyl pyrophosphate and isopentyl pyrophosphate into geranylgeranyl pyrophosphate (GGPP) (PubMed:29283570). Condensation of indole-3-glycerol phosphate with GGPP by the prenyl transferase nodC then forms 3-geranylgeranylindole (3-GGI) (PubMed:29283570). Epoxidation by the FAD-dependent monooxygenase nodM leads to a single-epoxidized-GGI that is substrate of the terpene cyclase nodB for cyclization to yield emindole SB (PubMed:29283570). The terminal methyl carbon, C28, of emindole SB is then oxidized by the cytochrome P450 monooxygenase nodW to produce nodulisporic acid F (NAF), the pentacyclic core of NAA (PubMed:29283570). NAF is converted to nodulisporic acid E (NAE) via prenylation. This step is probably performed by one of the indole diterpene prenyltransferases nodD1 or nodD2 (Probable). Several oxidation steps performed by the FAD-linked oxidoreductase nodO and one of the cytochrome P450 monooxygenase nodR, nodX or nodZ further convert NAE to nodulisporic acid D (NAD) (Probable). NAD is substrate of cytochrome P450 monooxygenase nodJ to produce the precursor of nodulisporic acid C (NAC), converted to NAC by one of the indole diterpene prenyltransferases nodD1 or nodD2 (Probable). The FAD-dependent monooxygenase nodY2 then oxidizes NAC to nodulisporic acid B (NAB) (Probable). Finally NAB is converted to NAA by one of the cytochrome P450 monooxygenases nodR, nodX or nodZ (Probable).</text>
</comment>
<comment type="pathway">
    <text evidence="5">Secondary metabolite biosynthesis.</text>
</comment>
<comment type="similarity">
    <text evidence="4">Belongs to the tryptophan dimethylallyltransferase family.</text>
</comment>
<proteinExistence type="inferred from homology"/>
<feature type="chain" id="PRO_0000446556" description="Indole diterpene prenyltransferase nodD2">
    <location>
        <begin position="1"/>
        <end position="434"/>
    </location>
</feature>
<feature type="binding site" evidence="1">
    <location>
        <begin position="85"/>
        <end position="86"/>
    </location>
    <ligand>
        <name>L-tryptophan</name>
        <dbReference type="ChEBI" id="CHEBI:57912"/>
    </ligand>
</feature>
<feature type="binding site" evidence="1">
    <location>
        <position position="94"/>
    </location>
    <ligand>
        <name>L-tryptophan</name>
        <dbReference type="ChEBI" id="CHEBI:57912"/>
    </ligand>
</feature>
<feature type="binding site" evidence="1">
    <location>
        <position position="107"/>
    </location>
    <ligand>
        <name>substrate</name>
    </ligand>
</feature>
<feature type="binding site" evidence="1">
    <location>
        <position position="194"/>
    </location>
    <ligand>
        <name>substrate</name>
    </ligand>
</feature>
<feature type="binding site" evidence="1">
    <location>
        <position position="268"/>
    </location>
    <ligand>
        <name>substrate</name>
    </ligand>
</feature>
<feature type="binding site" evidence="1">
    <location>
        <position position="270"/>
    </location>
    <ligand>
        <name>substrate</name>
    </ligand>
</feature>
<feature type="binding site" evidence="1">
    <location>
        <position position="272"/>
    </location>
    <ligand>
        <name>substrate</name>
    </ligand>
</feature>
<feature type="binding site" evidence="1">
    <location>
        <position position="351"/>
    </location>
    <ligand>
        <name>substrate</name>
    </ligand>
</feature>
<feature type="binding site" evidence="1">
    <location>
        <position position="353"/>
    </location>
    <ligand>
        <name>substrate</name>
    </ligand>
</feature>
<feature type="binding site" evidence="1">
    <location>
        <position position="418"/>
    </location>
    <ligand>
        <name>substrate</name>
    </ligand>
</feature>
<feature type="binding site" evidence="1">
    <location>
        <position position="422"/>
    </location>
    <ligand>
        <name>substrate</name>
    </ligand>
</feature>